<organism>
    <name type="scientific">Eleusine indica</name>
    <name type="common">Goosegrass</name>
    <name type="synonym">Cynosurus indicus</name>
    <dbReference type="NCBI Taxonomy" id="29674"/>
    <lineage>
        <taxon>Eukaryota</taxon>
        <taxon>Viridiplantae</taxon>
        <taxon>Streptophyta</taxon>
        <taxon>Embryophyta</taxon>
        <taxon>Tracheophyta</taxon>
        <taxon>Spermatophyta</taxon>
        <taxon>Magnoliopsida</taxon>
        <taxon>Liliopsida</taxon>
        <taxon>Poales</taxon>
        <taxon>Poaceae</taxon>
        <taxon>PACMAD clade</taxon>
        <taxon>Chloridoideae</taxon>
        <taxon>Cynodonteae</taxon>
        <taxon>Eleusininae</taxon>
        <taxon>Eleusine</taxon>
    </lineage>
</organism>
<protein>
    <recommendedName>
        <fullName evidence="2">Small ribosomal subunit protein uS4c</fullName>
    </recommendedName>
    <alternativeName>
        <fullName>30S ribosomal protein S4, chloroplastic</fullName>
    </alternativeName>
</protein>
<name>RR4_ELEIN</name>
<sequence>MSRYRGPRLKKIRRLGALPGLTRKTPKSGSNLKKKFYSGKKEQYRIRLQEKQKLRFHYGLTERQLLRYVHIAGKAKKSTGQVLLQLLEMRLDNIVFRLGMASTIPGARQLVNHRHILVNGRIVDIPSFRCKPRDIITTKDNQRSKRLVQNSIASFDPGRLPKHLTVDTLQYKGLVQKILDRKWVGLKINELLFVEY</sequence>
<accession>P36456</accession>
<dbReference type="EMBL" id="Z29237">
    <property type="protein sequence ID" value="CAA82436.1"/>
    <property type="molecule type" value="Genomic_DNA"/>
</dbReference>
<dbReference type="PIR" id="S41266">
    <property type="entry name" value="S41266"/>
</dbReference>
<dbReference type="SMR" id="P36456"/>
<dbReference type="GO" id="GO:0009507">
    <property type="term" value="C:chloroplast"/>
    <property type="evidence" value="ECO:0007669"/>
    <property type="project" value="UniProtKB-SubCell"/>
</dbReference>
<dbReference type="GO" id="GO:0015935">
    <property type="term" value="C:small ribosomal subunit"/>
    <property type="evidence" value="ECO:0007669"/>
    <property type="project" value="InterPro"/>
</dbReference>
<dbReference type="GO" id="GO:0019843">
    <property type="term" value="F:rRNA binding"/>
    <property type="evidence" value="ECO:0007669"/>
    <property type="project" value="UniProtKB-KW"/>
</dbReference>
<dbReference type="GO" id="GO:0003735">
    <property type="term" value="F:structural constituent of ribosome"/>
    <property type="evidence" value="ECO:0007669"/>
    <property type="project" value="InterPro"/>
</dbReference>
<dbReference type="GO" id="GO:0042274">
    <property type="term" value="P:ribosomal small subunit biogenesis"/>
    <property type="evidence" value="ECO:0007669"/>
    <property type="project" value="TreeGrafter"/>
</dbReference>
<dbReference type="GO" id="GO:0006412">
    <property type="term" value="P:translation"/>
    <property type="evidence" value="ECO:0007669"/>
    <property type="project" value="InterPro"/>
</dbReference>
<dbReference type="CDD" id="cd00165">
    <property type="entry name" value="S4"/>
    <property type="match status" value="1"/>
</dbReference>
<dbReference type="FunFam" id="1.10.1050.10:FF:000002">
    <property type="entry name" value="30S ribosomal protein S4, chloroplastic"/>
    <property type="match status" value="1"/>
</dbReference>
<dbReference type="FunFam" id="3.10.290.10:FF:000081">
    <property type="entry name" value="30S ribosomal protein S4, chloroplastic"/>
    <property type="match status" value="1"/>
</dbReference>
<dbReference type="Gene3D" id="1.10.1050.10">
    <property type="entry name" value="Ribosomal Protein S4 Delta 41, Chain A, domain 1"/>
    <property type="match status" value="1"/>
</dbReference>
<dbReference type="Gene3D" id="3.10.290.10">
    <property type="entry name" value="RNA-binding S4 domain"/>
    <property type="match status" value="1"/>
</dbReference>
<dbReference type="HAMAP" id="MF_01306_B">
    <property type="entry name" value="Ribosomal_uS4_B"/>
    <property type="match status" value="1"/>
</dbReference>
<dbReference type="InterPro" id="IPR022801">
    <property type="entry name" value="Ribosomal_uS4"/>
</dbReference>
<dbReference type="InterPro" id="IPR005709">
    <property type="entry name" value="Ribosomal_uS4_bac-type"/>
</dbReference>
<dbReference type="InterPro" id="IPR018079">
    <property type="entry name" value="Ribosomal_uS4_CS"/>
</dbReference>
<dbReference type="InterPro" id="IPR001912">
    <property type="entry name" value="Ribosomal_uS4_N"/>
</dbReference>
<dbReference type="InterPro" id="IPR002942">
    <property type="entry name" value="S4_RNA-bd"/>
</dbReference>
<dbReference type="InterPro" id="IPR036986">
    <property type="entry name" value="S4_RNA-bd_sf"/>
</dbReference>
<dbReference type="NCBIfam" id="NF003717">
    <property type="entry name" value="PRK05327.1"/>
    <property type="match status" value="1"/>
</dbReference>
<dbReference type="NCBIfam" id="TIGR01017">
    <property type="entry name" value="rpsD_bact"/>
    <property type="match status" value="1"/>
</dbReference>
<dbReference type="PANTHER" id="PTHR11831">
    <property type="entry name" value="30S 40S RIBOSOMAL PROTEIN"/>
    <property type="match status" value="1"/>
</dbReference>
<dbReference type="PANTHER" id="PTHR11831:SF4">
    <property type="entry name" value="SMALL RIBOSOMAL SUBUNIT PROTEIN US4M"/>
    <property type="match status" value="1"/>
</dbReference>
<dbReference type="Pfam" id="PF00163">
    <property type="entry name" value="Ribosomal_S4"/>
    <property type="match status" value="1"/>
</dbReference>
<dbReference type="Pfam" id="PF01479">
    <property type="entry name" value="S4"/>
    <property type="match status" value="1"/>
</dbReference>
<dbReference type="SMART" id="SM01390">
    <property type="entry name" value="Ribosomal_S4"/>
    <property type="match status" value="1"/>
</dbReference>
<dbReference type="SMART" id="SM00363">
    <property type="entry name" value="S4"/>
    <property type="match status" value="1"/>
</dbReference>
<dbReference type="SUPFAM" id="SSF55174">
    <property type="entry name" value="Alpha-L RNA-binding motif"/>
    <property type="match status" value="1"/>
</dbReference>
<dbReference type="PROSITE" id="PS00632">
    <property type="entry name" value="RIBOSOMAL_S4"/>
    <property type="match status" value="1"/>
</dbReference>
<dbReference type="PROSITE" id="PS50889">
    <property type="entry name" value="S4"/>
    <property type="match status" value="1"/>
</dbReference>
<gene>
    <name type="primary">rps4</name>
</gene>
<reference key="1">
    <citation type="journal article" date="1994" name="Plant Syst. Evol.">
        <title>The chloroplast gene rps4 as a tool for the study of Poaceae phylogeny.</title>
        <authorList>
            <person name="Nadot S."/>
            <person name="Bajon R."/>
            <person name="Lejeune B."/>
        </authorList>
        <dbReference type="AGRICOLA" id="IND20417698"/>
    </citation>
    <scope>NUCLEOTIDE SEQUENCE [GENOMIC DNA]</scope>
</reference>
<keyword id="KW-0150">Chloroplast</keyword>
<keyword id="KW-0934">Plastid</keyword>
<keyword id="KW-0687">Ribonucleoprotein</keyword>
<keyword id="KW-0689">Ribosomal protein</keyword>
<keyword id="KW-0694">RNA-binding</keyword>
<keyword id="KW-0699">rRNA-binding</keyword>
<proteinExistence type="inferred from homology"/>
<evidence type="ECO:0000250" key="1"/>
<evidence type="ECO:0000305" key="2"/>
<comment type="function">
    <text evidence="1">One of the primary rRNA binding proteins, it binds directly to 16S rRNA where it nucleates assembly of the body of the 30S subunit.</text>
</comment>
<comment type="function">
    <text evidence="1">With S5 and S12 plays an important role in translational accuracy.</text>
</comment>
<comment type="subunit">
    <text evidence="1">Part of the 30S ribosomal subunit. Contacts protein S5. The interaction surface between S4 and S5 is involved in control of translational fidelity (By similarity).</text>
</comment>
<comment type="subcellular location">
    <subcellularLocation>
        <location>Plastid</location>
        <location>Chloroplast</location>
    </subcellularLocation>
</comment>
<comment type="similarity">
    <text evidence="2">Belongs to the universal ribosomal protein uS4 family.</text>
</comment>
<geneLocation type="chloroplast"/>
<feature type="chain" id="PRO_0000132570" description="Small ribosomal subunit protein uS4c">
    <location>
        <begin position="1"/>
        <end position="196" status="greater than"/>
    </location>
</feature>
<feature type="domain" description="S4 RNA-binding">
    <location>
        <begin position="89"/>
        <end position="150"/>
    </location>
</feature>
<feature type="non-terminal residue">
    <location>
        <position position="196"/>
    </location>
</feature>